<proteinExistence type="inferred from homology"/>
<accession>B3GY67</accession>
<reference key="1">
    <citation type="submission" date="2008-06" db="EMBL/GenBank/DDBJ databases">
        <title>Genome and proteome analysis of A. pleuropneumoniae serotype 7.</title>
        <authorList>
            <person name="Linke B."/>
            <person name="Buettner F."/>
            <person name="Martinez-Arias R."/>
            <person name="Goesmann A."/>
            <person name="Baltes N."/>
            <person name="Tegetmeyer H."/>
            <person name="Singh M."/>
            <person name="Gerlach G.F."/>
        </authorList>
    </citation>
    <scope>NUCLEOTIDE SEQUENCE [LARGE SCALE GENOMIC DNA]</scope>
    <source>
        <strain>AP76</strain>
    </source>
</reference>
<organism>
    <name type="scientific">Actinobacillus pleuropneumoniae serotype 7 (strain AP76)</name>
    <dbReference type="NCBI Taxonomy" id="537457"/>
    <lineage>
        <taxon>Bacteria</taxon>
        <taxon>Pseudomonadati</taxon>
        <taxon>Pseudomonadota</taxon>
        <taxon>Gammaproteobacteria</taxon>
        <taxon>Pasteurellales</taxon>
        <taxon>Pasteurellaceae</taxon>
        <taxon>Actinobacillus</taxon>
    </lineage>
</organism>
<protein>
    <recommendedName>
        <fullName evidence="1">Argininosuccinate lyase</fullName>
        <shortName evidence="1">ASAL</shortName>
        <ecNumber evidence="1">4.3.2.1</ecNumber>
    </recommendedName>
    <alternativeName>
        <fullName evidence="1">Arginosuccinase</fullName>
    </alternativeName>
</protein>
<name>ARLY_ACTP7</name>
<feature type="chain" id="PRO_1000089062" description="Argininosuccinate lyase">
    <location>
        <begin position="1"/>
        <end position="458"/>
    </location>
</feature>
<comment type="catalytic activity">
    <reaction evidence="1">
        <text>2-(N(omega)-L-arginino)succinate = fumarate + L-arginine</text>
        <dbReference type="Rhea" id="RHEA:24020"/>
        <dbReference type="ChEBI" id="CHEBI:29806"/>
        <dbReference type="ChEBI" id="CHEBI:32682"/>
        <dbReference type="ChEBI" id="CHEBI:57472"/>
        <dbReference type="EC" id="4.3.2.1"/>
    </reaction>
</comment>
<comment type="pathway">
    <text evidence="1">Amino-acid biosynthesis; L-arginine biosynthesis; L-arginine from L-ornithine and carbamoyl phosphate: step 3/3.</text>
</comment>
<comment type="subcellular location">
    <subcellularLocation>
        <location evidence="1">Cytoplasm</location>
    </subcellularLocation>
</comment>
<comment type="similarity">
    <text evidence="1">Belongs to the lyase 1 family. Argininosuccinate lyase subfamily.</text>
</comment>
<keyword id="KW-0028">Amino-acid biosynthesis</keyword>
<keyword id="KW-0055">Arginine biosynthesis</keyword>
<keyword id="KW-0963">Cytoplasm</keyword>
<keyword id="KW-0456">Lyase</keyword>
<evidence type="ECO:0000255" key="1">
    <source>
        <dbReference type="HAMAP-Rule" id="MF_00006"/>
    </source>
</evidence>
<gene>
    <name evidence="1" type="primary">argH</name>
    <name type="ordered locus">APP7_1238</name>
</gene>
<sequence length="458" mass="51048">MALWGGRFKQEADAKFKFFNDSLRFDYRLALQDIDGSIGWAKAITSVGILTEQEHQQLVVALKELRAEIEPNIAIILRDDAEDIHSWVESKLIEKVGDLGKKLHTGRSRNDQVAVDMKMWCKVQAVVLQERIRNLQHKLVETAEANQNAVMPGYTHLQRAQPITFAHWCMAYYEMLERDFSRLSDAYKRMHTCPLGSGALAGTAYSIDRDALAQDLGFSIGTRNSLDSVSDRDHVLELLSTASISMVHLSRFAEDLIFFNSGESAFLELSDRVTSGSSLMPQKKNPDACELIRGKSGRVFGALSGLLTTLKGLPLAYNKDMQEDKEGIFDAMETWQACLEIGALVLEDINVNVERTREAAQQGYSNATELADYLVAKGIPFREAHHIVGEAVVYAISKREPLEALSVAEFKQFHPVIDEDVYPILSLESCLEKRSAKGGVNPERVREAIEAAKVNLGA</sequence>
<dbReference type="EC" id="4.3.2.1" evidence="1"/>
<dbReference type="EMBL" id="CP001091">
    <property type="protein sequence ID" value="ACE61890.1"/>
    <property type="molecule type" value="Genomic_DNA"/>
</dbReference>
<dbReference type="RefSeq" id="WP_005617656.1">
    <property type="nucleotide sequence ID" value="NC_010939.1"/>
</dbReference>
<dbReference type="SMR" id="B3GY67"/>
<dbReference type="KEGG" id="apa:APP7_1238"/>
<dbReference type="HOGENOM" id="CLU_027272_2_3_6"/>
<dbReference type="UniPathway" id="UPA00068">
    <property type="reaction ID" value="UER00114"/>
</dbReference>
<dbReference type="Proteomes" id="UP000001226">
    <property type="component" value="Chromosome"/>
</dbReference>
<dbReference type="GO" id="GO:0005829">
    <property type="term" value="C:cytosol"/>
    <property type="evidence" value="ECO:0007669"/>
    <property type="project" value="TreeGrafter"/>
</dbReference>
<dbReference type="GO" id="GO:0004056">
    <property type="term" value="F:argininosuccinate lyase activity"/>
    <property type="evidence" value="ECO:0007669"/>
    <property type="project" value="UniProtKB-UniRule"/>
</dbReference>
<dbReference type="GO" id="GO:0042450">
    <property type="term" value="P:arginine biosynthetic process via ornithine"/>
    <property type="evidence" value="ECO:0007669"/>
    <property type="project" value="InterPro"/>
</dbReference>
<dbReference type="GO" id="GO:0006526">
    <property type="term" value="P:L-arginine biosynthetic process"/>
    <property type="evidence" value="ECO:0007669"/>
    <property type="project" value="UniProtKB-UniRule"/>
</dbReference>
<dbReference type="CDD" id="cd01359">
    <property type="entry name" value="Argininosuccinate_lyase"/>
    <property type="match status" value="1"/>
</dbReference>
<dbReference type="FunFam" id="1.10.40.30:FF:000001">
    <property type="entry name" value="Argininosuccinate lyase"/>
    <property type="match status" value="1"/>
</dbReference>
<dbReference type="FunFam" id="1.20.200.10:FF:000006">
    <property type="entry name" value="Argininosuccinate lyase"/>
    <property type="match status" value="1"/>
</dbReference>
<dbReference type="Gene3D" id="1.10.40.30">
    <property type="entry name" value="Fumarase/aspartase (C-terminal domain)"/>
    <property type="match status" value="1"/>
</dbReference>
<dbReference type="Gene3D" id="1.20.200.10">
    <property type="entry name" value="Fumarase/aspartase (Central domain)"/>
    <property type="match status" value="1"/>
</dbReference>
<dbReference type="Gene3D" id="1.10.275.10">
    <property type="entry name" value="Fumarase/aspartase (N-terminal domain)"/>
    <property type="match status" value="1"/>
</dbReference>
<dbReference type="HAMAP" id="MF_00006">
    <property type="entry name" value="Arg_succ_lyase"/>
    <property type="match status" value="1"/>
</dbReference>
<dbReference type="InterPro" id="IPR029419">
    <property type="entry name" value="Arg_succ_lyase_C"/>
</dbReference>
<dbReference type="InterPro" id="IPR009049">
    <property type="entry name" value="Argininosuccinate_lyase"/>
</dbReference>
<dbReference type="InterPro" id="IPR024083">
    <property type="entry name" value="Fumarase/histidase_N"/>
</dbReference>
<dbReference type="InterPro" id="IPR020557">
    <property type="entry name" value="Fumarate_lyase_CS"/>
</dbReference>
<dbReference type="InterPro" id="IPR000362">
    <property type="entry name" value="Fumarate_lyase_fam"/>
</dbReference>
<dbReference type="InterPro" id="IPR022761">
    <property type="entry name" value="Fumarate_lyase_N"/>
</dbReference>
<dbReference type="InterPro" id="IPR008948">
    <property type="entry name" value="L-Aspartase-like"/>
</dbReference>
<dbReference type="NCBIfam" id="TIGR00838">
    <property type="entry name" value="argH"/>
    <property type="match status" value="1"/>
</dbReference>
<dbReference type="NCBIfam" id="NF008964">
    <property type="entry name" value="PRK12308.1"/>
    <property type="match status" value="1"/>
</dbReference>
<dbReference type="PANTHER" id="PTHR43814">
    <property type="entry name" value="ARGININOSUCCINATE LYASE"/>
    <property type="match status" value="1"/>
</dbReference>
<dbReference type="PANTHER" id="PTHR43814:SF1">
    <property type="entry name" value="ARGININOSUCCINATE LYASE"/>
    <property type="match status" value="1"/>
</dbReference>
<dbReference type="Pfam" id="PF14698">
    <property type="entry name" value="ASL_C2"/>
    <property type="match status" value="1"/>
</dbReference>
<dbReference type="Pfam" id="PF00206">
    <property type="entry name" value="Lyase_1"/>
    <property type="match status" value="1"/>
</dbReference>
<dbReference type="PRINTS" id="PR00145">
    <property type="entry name" value="ARGSUCLYASE"/>
</dbReference>
<dbReference type="PRINTS" id="PR00149">
    <property type="entry name" value="FUMRATELYASE"/>
</dbReference>
<dbReference type="SUPFAM" id="SSF48557">
    <property type="entry name" value="L-aspartase-like"/>
    <property type="match status" value="1"/>
</dbReference>
<dbReference type="PROSITE" id="PS00163">
    <property type="entry name" value="FUMARATE_LYASES"/>
    <property type="match status" value="1"/>
</dbReference>